<name>SETBP_MOUSE</name>
<gene>
    <name type="primary">Setbp1</name>
    <name type="synonym">Kiaa0437</name>
</gene>
<feature type="chain" id="PRO_0000097699" description="SET-binding protein">
    <location>
        <begin position="1"/>
        <end position="1582"/>
    </location>
</feature>
<feature type="DNA-binding region" description="A.T hook 1">
    <location>
        <begin position="575"/>
        <end position="587"/>
    </location>
</feature>
<feature type="DNA-binding region" description="A.T hook 2">
    <location>
        <begin position="1007"/>
        <end position="1019"/>
    </location>
</feature>
<feature type="DNA-binding region" description="A.T hook 3">
    <location>
        <begin position="1440"/>
        <end position="1452"/>
    </location>
</feature>
<feature type="region of interest" description="Disordered" evidence="2">
    <location>
        <begin position="1"/>
        <end position="76"/>
    </location>
</feature>
<feature type="region of interest" description="Disordered" evidence="2">
    <location>
        <begin position="124"/>
        <end position="246"/>
    </location>
</feature>
<feature type="region of interest" description="Disordered" evidence="2">
    <location>
        <begin position="278"/>
        <end position="416"/>
    </location>
</feature>
<feature type="region of interest" description="Disordered" evidence="2">
    <location>
        <begin position="446"/>
        <end position="513"/>
    </location>
</feature>
<feature type="region of interest" description="Disordered" evidence="2">
    <location>
        <begin position="595"/>
        <end position="617"/>
    </location>
</feature>
<feature type="region of interest" description="Disordered" evidence="2">
    <location>
        <begin position="709"/>
        <end position="787"/>
    </location>
</feature>
<feature type="region of interest" description="Disordered" evidence="2">
    <location>
        <begin position="845"/>
        <end position="880"/>
    </location>
</feature>
<feature type="region of interest" description="Disordered" evidence="2">
    <location>
        <begin position="1128"/>
        <end position="1155"/>
    </location>
</feature>
<feature type="region of interest" description="Disordered" evidence="2">
    <location>
        <begin position="1182"/>
        <end position="1215"/>
    </location>
</feature>
<feature type="region of interest" description="Disordered" evidence="2">
    <location>
        <begin position="1236"/>
        <end position="1265"/>
    </location>
</feature>
<feature type="region of interest" description="Disordered" evidence="2">
    <location>
        <begin position="1429"/>
        <end position="1461"/>
    </location>
</feature>
<feature type="region of interest" description="Disordered" evidence="2">
    <location>
        <begin position="1470"/>
        <end position="1489"/>
    </location>
</feature>
<feature type="region of interest" description="Disordered" evidence="2">
    <location>
        <begin position="1507"/>
        <end position="1582"/>
    </location>
</feature>
<feature type="compositionally biased region" description="Polar residues" evidence="2">
    <location>
        <begin position="18"/>
        <end position="27"/>
    </location>
</feature>
<feature type="compositionally biased region" description="Basic and acidic residues" evidence="2">
    <location>
        <begin position="57"/>
        <end position="74"/>
    </location>
</feature>
<feature type="compositionally biased region" description="Polar residues" evidence="2">
    <location>
        <begin position="126"/>
        <end position="141"/>
    </location>
</feature>
<feature type="compositionally biased region" description="Polar residues" evidence="2">
    <location>
        <begin position="213"/>
        <end position="229"/>
    </location>
</feature>
<feature type="compositionally biased region" description="Low complexity" evidence="2">
    <location>
        <begin position="278"/>
        <end position="298"/>
    </location>
</feature>
<feature type="compositionally biased region" description="Basic and acidic residues" evidence="2">
    <location>
        <begin position="356"/>
        <end position="365"/>
    </location>
</feature>
<feature type="compositionally biased region" description="Polar residues" evidence="2">
    <location>
        <begin position="368"/>
        <end position="388"/>
    </location>
</feature>
<feature type="compositionally biased region" description="Basic and acidic residues" evidence="2">
    <location>
        <begin position="450"/>
        <end position="465"/>
    </location>
</feature>
<feature type="compositionally biased region" description="Polar residues" evidence="2">
    <location>
        <begin position="770"/>
        <end position="787"/>
    </location>
</feature>
<feature type="compositionally biased region" description="Polar residues" evidence="2">
    <location>
        <begin position="845"/>
        <end position="871"/>
    </location>
</feature>
<feature type="compositionally biased region" description="Basic residues" evidence="2">
    <location>
        <begin position="1137"/>
        <end position="1150"/>
    </location>
</feature>
<feature type="compositionally biased region" description="Basic and acidic residues" evidence="2">
    <location>
        <begin position="1182"/>
        <end position="1196"/>
    </location>
</feature>
<feature type="compositionally biased region" description="Basic residues" evidence="2">
    <location>
        <begin position="1439"/>
        <end position="1448"/>
    </location>
</feature>
<feature type="compositionally biased region" description="Pro residues" evidence="2">
    <location>
        <begin position="1509"/>
        <end position="1533"/>
    </location>
</feature>
<feature type="compositionally biased region" description="Pro residues" evidence="2">
    <location>
        <begin position="1546"/>
        <end position="1559"/>
    </location>
</feature>
<feature type="modified residue" description="N6-acetyllysine" evidence="4">
    <location>
        <position position="808"/>
    </location>
</feature>
<feature type="sequence conflict" description="In Ref. 4; BAA36338." evidence="3" ref="4">
    <original>D</original>
    <variation>L</variation>
    <location>
        <position position="1281"/>
    </location>
</feature>
<feature type="sequence conflict" description="In Ref. 2; AAH80865." evidence="3" ref="2">
    <original>K</original>
    <variation>N</variation>
    <location>
        <position position="1433"/>
    </location>
</feature>
<feature type="sequence conflict" description="In Ref. 4; BAA36338." evidence="3" ref="4">
    <original>C</original>
    <variation>W</variation>
    <location>
        <position position="1467"/>
    </location>
</feature>
<feature type="sequence conflict" description="In Ref. 4; BAA36338." evidence="3" ref="4">
    <original>QK</original>
    <variation>PE</variation>
    <location>
        <begin position="1476"/>
        <end position="1477"/>
    </location>
</feature>
<feature type="sequence conflict" description="In Ref. 3; BAC97953." evidence="3" ref="3">
    <location>
        <begin position="1509"/>
        <end position="1529"/>
    </location>
</feature>
<protein>
    <recommendedName>
        <fullName>SET-binding protein</fullName>
        <shortName>SEB</shortName>
    </recommendedName>
</protein>
<proteinExistence type="evidence at protein level"/>
<sequence length="1582" mass="173077">MEPREMLSSCRQRGSESEFLQGSSSRSPPAPGCSGEPLKGISVGGERMEPEEEDELGSGRDVDCNSNADSEKWVAGDGLEEQEFSIKEANFTEGSLKLKIQTTKRAKKPPKNLENYICPPEIKITIKQSGDQKVSRTGKNSKATKEDERNHSKKKLLTAGDPTASDLKAFQTQAYERPQKHSTLQYDPGHSQGFTSDTLKPKHQQKSSSQSHMEWSSNSDSGPATQNCFISPEAGRDTASTSKVPALEPVASFAKAQSKKGSTGGAWSQLSSSSKDLLLGSVVPSPSSHNSPATPSSSAECNGLQPLGDQDGGSTKDLPEPPTLSSKKKSSKKDMISQTLPNSDLDWVKSAQKAFETTEGKREAYSADSAQEASPARQSISSVSNPENDSSHVRITIPIKTPSLDPSNHKRKKRQSIKAVVEKIVPEKALASGISMSSEVVNRILSNSEGSKKDPRVPKLGKMIENETPSVGLETGGNAEKIVPGGASKQRKPPMVMTSPTRTEHAPSGKLSEIQHPKFAAKRRCSKAKPPAMLREAVLATAEKLMVEPPSAYPITPSSPLYTNTDSLTVITPVKKKRGRPKKQPLLTVETIHEGTSTSPVSPISREFPGTKKRKRRRNLAKLAQLVPGEDKPMSEMKFHKKVGKLGVLDKKTIKTINKMKTLKRKNILNQILSCSSSVALKAKAPPETSPGAASIESKLGKQINVSKRGTIYIGKKRGRKPRTELPPPSEEPKTAIKHPRPVSSQPDVPAVPSSFQSPVASSPAAMHPLSTQLGGSNGNLSPASTETNFSELKTMPNLQPISALPTKTQKGIHGGTWKLSPPRLMANSPSHLCEIGSLKEITLSPVSESHSEETIPSDSGIGTDNNSTSDQAEKSSESRRRYSFDFCSLDNPEAIPSDTSTKNRHGHRQKHLIVDTFLAHESLKKPKHKRKRKSLQNRDDLQFLAELEELITKFQVFRISHRGYTFYHENPYPSIFRINFDQYYPVPYIQYDPLLYLRRTSDLKSKKKRGRPAKTNDTMTKVPFLQGFSYPIPSGSYYAPYGMPYTSMPMMNLGYYGQYPAPLYLSHTLGAASPFMRPTVPPPQFHASSHVKISGATKHKAKHGVHLQGTVGMGLGDIQPSLNPPKVGGATLSSSRLHKRKHKHKRKHKEDRILGTHDNLSGLFAGKATGFSSHLLSERLSGSDKELPLVSEKSKHKERQKHQHGEASHKVSKNNFEVDTLSTLSLSDAQHWTQAKDKGDLSSEPVESCAKRYSGSGGDSTRSEGLDVFSEMNPSSDKWDSDMGGSKRRSFEGFGTYREKDIQAFKMNRKERGSYESSMSPGMPSPHLKVDQTAAHSKSEGSISAMMARKKPTAVDSVAIPSAPVLSLLAASAATSDAASSSLKKRFKRREIEAIQCEVRKMCHYTKLLSTKKNLDHVNKILKAKRLQRQSKTGNNFVKKRRGRPRKQPSQFDEDSRDQMPVLEKCIDLPSKRGQKPSLSPLALEPASGQDAVMATIEAVIHMAREAPPLPPPPPPPLPPPPPPPPPPPPLPKTARGGKRKHRPQPPAQPAQPTPQPLPQEEEVKAKRPRKSRASESDVLP</sequence>
<dbReference type="EMBL" id="AC114924">
    <property type="status" value="NOT_ANNOTATED_CDS"/>
    <property type="molecule type" value="Genomic_DNA"/>
</dbReference>
<dbReference type="EMBL" id="AC131736">
    <property type="status" value="NOT_ANNOTATED_CDS"/>
    <property type="molecule type" value="Genomic_DNA"/>
</dbReference>
<dbReference type="EMBL" id="AC140455">
    <property type="status" value="NOT_ANNOTATED_CDS"/>
    <property type="molecule type" value="Genomic_DNA"/>
</dbReference>
<dbReference type="EMBL" id="AC146613">
    <property type="status" value="NOT_ANNOTATED_CDS"/>
    <property type="molecule type" value="Genomic_DNA"/>
</dbReference>
<dbReference type="EMBL" id="BC080865">
    <property type="protein sequence ID" value="AAH80865.1"/>
    <property type="status" value="ALT_INIT"/>
    <property type="molecule type" value="mRNA"/>
</dbReference>
<dbReference type="EMBL" id="AK129143">
    <property type="protein sequence ID" value="BAC97953.1"/>
    <property type="molecule type" value="mRNA"/>
</dbReference>
<dbReference type="EMBL" id="AB015614">
    <property type="protein sequence ID" value="BAA36338.1"/>
    <property type="molecule type" value="mRNA"/>
</dbReference>
<dbReference type="CCDS" id="CCDS29362.2"/>
<dbReference type="RefSeq" id="NP_444329.2">
    <property type="nucleotide sequence ID" value="NM_053099.3"/>
</dbReference>
<dbReference type="BioGRID" id="232199">
    <property type="interactions" value="2"/>
</dbReference>
<dbReference type="CORUM" id="Q9Z180"/>
<dbReference type="FunCoup" id="Q9Z180">
    <property type="interactions" value="2663"/>
</dbReference>
<dbReference type="IntAct" id="Q9Z180">
    <property type="interactions" value="1"/>
</dbReference>
<dbReference type="MINT" id="Q9Z180"/>
<dbReference type="STRING" id="10090.ENSMUSP00000025430"/>
<dbReference type="GlyGen" id="Q9Z180">
    <property type="glycosylation" value="9 sites, 1 O-linked glycan (6 sites)"/>
</dbReference>
<dbReference type="iPTMnet" id="Q9Z180"/>
<dbReference type="PhosphoSitePlus" id="Q9Z180"/>
<dbReference type="PaxDb" id="10090-ENSMUSP00000124497"/>
<dbReference type="ProteomicsDB" id="256625"/>
<dbReference type="Antibodypedia" id="22406">
    <property type="antibodies" value="169 antibodies from 25 providers"/>
</dbReference>
<dbReference type="DNASU" id="240427"/>
<dbReference type="Ensembl" id="ENSMUST00000025430.11">
    <property type="protein sequence ID" value="ENSMUSP00000025430.10"/>
    <property type="gene ID" value="ENSMUSG00000024548.12"/>
</dbReference>
<dbReference type="GeneID" id="240427"/>
<dbReference type="KEGG" id="mmu:240427"/>
<dbReference type="UCSC" id="uc008fsi.2">
    <property type="organism name" value="mouse"/>
</dbReference>
<dbReference type="AGR" id="MGI:1933199"/>
<dbReference type="CTD" id="26040"/>
<dbReference type="MGI" id="MGI:1933199">
    <property type="gene designation" value="Setbp1"/>
</dbReference>
<dbReference type="VEuPathDB" id="HostDB:ENSMUSG00000024548"/>
<dbReference type="eggNOG" id="KOG1083">
    <property type="taxonomic scope" value="Eukaryota"/>
</dbReference>
<dbReference type="GeneTree" id="ENSGT00940000158784"/>
<dbReference type="HOGENOM" id="CLU_005903_0_0_1"/>
<dbReference type="InParanoid" id="Q9Z180"/>
<dbReference type="OMA" id="RHSHRPK"/>
<dbReference type="OrthoDB" id="9937744at2759"/>
<dbReference type="PhylomeDB" id="Q9Z180"/>
<dbReference type="TreeFam" id="TF106416"/>
<dbReference type="BioGRID-ORCS" id="240427">
    <property type="hits" value="3 hits in 81 CRISPR screens"/>
</dbReference>
<dbReference type="ChiTaRS" id="Setbp1">
    <property type="organism name" value="mouse"/>
</dbReference>
<dbReference type="PRO" id="PR:Q9Z180"/>
<dbReference type="Proteomes" id="UP000000589">
    <property type="component" value="Chromosome 18"/>
</dbReference>
<dbReference type="RNAct" id="Q9Z180">
    <property type="molecule type" value="protein"/>
</dbReference>
<dbReference type="Bgee" id="ENSMUSG00000024548">
    <property type="expression patterns" value="Expressed in dorsal root ganglion and 85 other cell types or tissues"/>
</dbReference>
<dbReference type="GO" id="GO:0005829">
    <property type="term" value="C:cytosol"/>
    <property type="evidence" value="ECO:0007669"/>
    <property type="project" value="Ensembl"/>
</dbReference>
<dbReference type="GO" id="GO:0016604">
    <property type="term" value="C:nuclear body"/>
    <property type="evidence" value="ECO:0007669"/>
    <property type="project" value="Ensembl"/>
</dbReference>
<dbReference type="GO" id="GO:0005634">
    <property type="term" value="C:nucleus"/>
    <property type="evidence" value="ECO:0000266"/>
    <property type="project" value="MGI"/>
</dbReference>
<dbReference type="GO" id="GO:0003677">
    <property type="term" value="F:DNA binding"/>
    <property type="evidence" value="ECO:0007669"/>
    <property type="project" value="UniProtKB-KW"/>
</dbReference>
<dbReference type="InterPro" id="IPR017956">
    <property type="entry name" value="AT_hook_DNA-bd_motif"/>
</dbReference>
<dbReference type="PANTHER" id="PTHR46147">
    <property type="entry name" value="HISTONE-LYSINE N-METHYLTRANSFERASE ASH1"/>
    <property type="match status" value="1"/>
</dbReference>
<dbReference type="PANTHER" id="PTHR46147:SF2">
    <property type="entry name" value="SET-BINDING PROTEIN"/>
    <property type="match status" value="1"/>
</dbReference>
<dbReference type="SMART" id="SM00384">
    <property type="entry name" value="AT_hook"/>
    <property type="match status" value="3"/>
</dbReference>
<comment type="subunit">
    <text evidence="1">Interacts with SET.</text>
</comment>
<comment type="subcellular location">
    <subcellularLocation>
        <location evidence="1">Nucleus</location>
    </subcellularLocation>
</comment>
<comment type="sequence caution" evidence="3">
    <conflict type="erroneous initiation">
        <sequence resource="EMBL-CDS" id="AAH80865"/>
    </conflict>
    <text>Truncated N-terminus.</text>
</comment>
<keyword id="KW-0007">Acetylation</keyword>
<keyword id="KW-0238">DNA-binding</keyword>
<keyword id="KW-0539">Nucleus</keyword>
<keyword id="KW-1185">Reference proteome</keyword>
<keyword id="KW-0677">Repeat</keyword>
<evidence type="ECO:0000250" key="1"/>
<evidence type="ECO:0000256" key="2">
    <source>
        <dbReference type="SAM" id="MobiDB-lite"/>
    </source>
</evidence>
<evidence type="ECO:0000305" key="3"/>
<evidence type="ECO:0007744" key="4">
    <source>
    </source>
</evidence>
<organism>
    <name type="scientific">Mus musculus</name>
    <name type="common">Mouse</name>
    <dbReference type="NCBI Taxonomy" id="10090"/>
    <lineage>
        <taxon>Eukaryota</taxon>
        <taxon>Metazoa</taxon>
        <taxon>Chordata</taxon>
        <taxon>Craniata</taxon>
        <taxon>Vertebrata</taxon>
        <taxon>Euteleostomi</taxon>
        <taxon>Mammalia</taxon>
        <taxon>Eutheria</taxon>
        <taxon>Euarchontoglires</taxon>
        <taxon>Glires</taxon>
        <taxon>Rodentia</taxon>
        <taxon>Myomorpha</taxon>
        <taxon>Muroidea</taxon>
        <taxon>Muridae</taxon>
        <taxon>Murinae</taxon>
        <taxon>Mus</taxon>
        <taxon>Mus</taxon>
    </lineage>
</organism>
<accession>Q9Z180</accession>
<accession>Q66JL8</accession>
<reference key="1">
    <citation type="journal article" date="2009" name="PLoS Biol.">
        <title>Lineage-specific biology revealed by a finished genome assembly of the mouse.</title>
        <authorList>
            <person name="Church D.M."/>
            <person name="Goodstadt L."/>
            <person name="Hillier L.W."/>
            <person name="Zody M.C."/>
            <person name="Goldstein S."/>
            <person name="She X."/>
            <person name="Bult C.J."/>
            <person name="Agarwala R."/>
            <person name="Cherry J.L."/>
            <person name="DiCuccio M."/>
            <person name="Hlavina W."/>
            <person name="Kapustin Y."/>
            <person name="Meric P."/>
            <person name="Maglott D."/>
            <person name="Birtle Z."/>
            <person name="Marques A.C."/>
            <person name="Graves T."/>
            <person name="Zhou S."/>
            <person name="Teague B."/>
            <person name="Potamousis K."/>
            <person name="Churas C."/>
            <person name="Place M."/>
            <person name="Herschleb J."/>
            <person name="Runnheim R."/>
            <person name="Forrest D."/>
            <person name="Amos-Landgraf J."/>
            <person name="Schwartz D.C."/>
            <person name="Cheng Z."/>
            <person name="Lindblad-Toh K."/>
            <person name="Eichler E.E."/>
            <person name="Ponting C.P."/>
        </authorList>
    </citation>
    <scope>NUCLEOTIDE SEQUENCE [LARGE SCALE GENOMIC DNA]</scope>
    <source>
        <strain>C57BL/6J</strain>
    </source>
</reference>
<reference key="2">
    <citation type="journal article" date="2004" name="Genome Res.">
        <title>The status, quality, and expansion of the NIH full-length cDNA project: the Mammalian Gene Collection (MGC).</title>
        <authorList>
            <consortium name="The MGC Project Team"/>
        </authorList>
    </citation>
    <scope>NUCLEOTIDE SEQUENCE [LARGE SCALE MRNA] OF 27-1582</scope>
    <source>
        <strain>C57BL/6J</strain>
        <tissue>Brain</tissue>
    </source>
</reference>
<reference key="3">
    <citation type="journal article" date="2003" name="DNA Res.">
        <title>Prediction of the coding sequences of mouse homologues of KIAA gene: III. The complete nucleotide sequences of 500 mouse KIAA-homologous cDNAs identified by screening of terminal sequences of cDNA clones randomly sampled from size-fractionated libraries.</title>
        <authorList>
            <person name="Okazaki N."/>
            <person name="Kikuno R."/>
            <person name="Ohara R."/>
            <person name="Inamoto S."/>
            <person name="Koseki H."/>
            <person name="Hiraoka S."/>
            <person name="Saga Y."/>
            <person name="Nagase T."/>
            <person name="Ohara O."/>
            <person name="Koga H."/>
        </authorList>
    </citation>
    <scope>NUCLEOTIDE SEQUENCE [LARGE SCALE MRNA] OF 155-1582</scope>
    <source>
        <tissue>Embryonic tail</tissue>
    </source>
</reference>
<reference key="4">
    <citation type="journal article" date="2001" name="Eur. J. Biochem.">
        <title>Identification and characterization of SEB, a novel protein that binds to the acute undifferentiated leukemia-associated protein SET.</title>
        <authorList>
            <person name="Minakuchi M."/>
            <person name="Kakazu N."/>
            <person name="Gorrin-Rivas M.J."/>
            <person name="Abe T."/>
            <person name="Copeland T.D."/>
            <person name="Ueda K."/>
            <person name="Adachi Y."/>
        </authorList>
    </citation>
    <scope>NUCLEOTIDE SEQUENCE [MRNA] OF 1281-1477</scope>
    <source>
        <tissue>Embryo</tissue>
    </source>
</reference>
<reference key="5">
    <citation type="journal article" date="2013" name="Mol. Cell">
        <title>SIRT5-mediated lysine desuccinylation impacts diverse metabolic pathways.</title>
        <authorList>
            <person name="Park J."/>
            <person name="Chen Y."/>
            <person name="Tishkoff D.X."/>
            <person name="Peng C."/>
            <person name="Tan M."/>
            <person name="Dai L."/>
            <person name="Xie Z."/>
            <person name="Zhang Y."/>
            <person name="Zwaans B.M."/>
            <person name="Skinner M.E."/>
            <person name="Lombard D.B."/>
            <person name="Zhao Y."/>
        </authorList>
    </citation>
    <scope>ACETYLATION [LARGE SCALE ANALYSIS] AT LYS-808</scope>
    <scope>IDENTIFICATION BY MASS SPECTROMETRY [LARGE SCALE ANALYSIS]</scope>
    <source>
        <tissue>Embryonic fibroblast</tissue>
    </source>
</reference>